<organism>
    <name type="scientific">Staphylococcus aureus (strain Mu50 / ATCC 700699)</name>
    <dbReference type="NCBI Taxonomy" id="158878"/>
    <lineage>
        <taxon>Bacteria</taxon>
        <taxon>Bacillati</taxon>
        <taxon>Bacillota</taxon>
        <taxon>Bacilli</taxon>
        <taxon>Bacillales</taxon>
        <taxon>Staphylococcaceae</taxon>
        <taxon>Staphylococcus</taxon>
    </lineage>
</organism>
<feature type="chain" id="PRO_0000068584" description="Spectinomycin 9-adenylyltransferase">
    <location>
        <begin position="1"/>
        <end position="260"/>
    </location>
</feature>
<keyword id="KW-0046">Antibiotic resistance</keyword>
<keyword id="KW-0067">ATP-binding</keyword>
<keyword id="KW-0547">Nucleotide-binding</keyword>
<keyword id="KW-0548">Nucleotidyltransferase</keyword>
<keyword id="KW-0808">Transferase</keyword>
<keyword id="KW-0814">Transposable element</keyword>
<proteinExistence type="inferred from homology"/>
<reference key="1">
    <citation type="journal article" date="2001" name="Lancet">
        <title>Whole genome sequencing of meticillin-resistant Staphylococcus aureus.</title>
        <authorList>
            <person name="Kuroda M."/>
            <person name="Ohta T."/>
            <person name="Uchiyama I."/>
            <person name="Baba T."/>
            <person name="Yuzawa H."/>
            <person name="Kobayashi I."/>
            <person name="Cui L."/>
            <person name="Oguchi A."/>
            <person name="Aoki K."/>
            <person name="Nagai Y."/>
            <person name="Lian J.-Q."/>
            <person name="Ito T."/>
            <person name="Kanamori M."/>
            <person name="Matsumaru H."/>
            <person name="Maruyama A."/>
            <person name="Murakami H."/>
            <person name="Hosoyama A."/>
            <person name="Mizutani-Ui Y."/>
            <person name="Takahashi N.K."/>
            <person name="Sawano T."/>
            <person name="Inoue R."/>
            <person name="Kaito C."/>
            <person name="Sekimizu K."/>
            <person name="Hirakawa H."/>
            <person name="Kuhara S."/>
            <person name="Goto S."/>
            <person name="Yabuzaki J."/>
            <person name="Kanehisa M."/>
            <person name="Yamashita A."/>
            <person name="Oshima K."/>
            <person name="Furuya K."/>
            <person name="Yoshino C."/>
            <person name="Shiba T."/>
            <person name="Hattori M."/>
            <person name="Ogasawara N."/>
            <person name="Hayashi H."/>
            <person name="Hiramatsu K."/>
        </authorList>
    </citation>
    <scope>NUCLEOTIDE SEQUENCE [LARGE SCALE GENOMIC DNA]</scope>
    <source>
        <strain>Mu50 / ATCC 700699</strain>
    </source>
</reference>
<gene>
    <name type="primary">ant1</name>
    <name type="synonym">spc1</name>
    <name type="ordered locus">SAV0053</name>
</gene>
<gene>
    <name type="primary">ant2</name>
    <name type="synonym">spc2</name>
    <name type="ordered locus">SAV1656</name>
</gene>
<protein>
    <recommendedName>
        <fullName evidence="1">Spectinomycin 9-adenylyltransferase</fullName>
    </recommendedName>
    <alternativeName>
        <fullName>AAD(9)</fullName>
    </alternativeName>
</protein>
<name>S9AD_STAAM</name>
<sequence length="260" mass="28975">MSNLINGKIPNQAIQTLKIVKDLFGSSIVGVYLFGSAVNGGLRINSDVDVLVVVNHSLPQLTRKKLTERLMTISGKIGNTDSVRPLEVTVINRSEVVPWQYPPKREFIYGEWLRGEFENGQIQEPSYDPDLAIVLAQARKNSISLFGPDSSSILVSVPLTDIRRAIKDSLPELIEGIKGDERNVILTLARMWQTVTTGEITSKDVAAEWAIPLLPKEHVTLLDIARKGYRGECDDKWEGLYSKVKALVKYMKNSIETSLN</sequence>
<dbReference type="EMBL" id="BA000017">
    <property type="protein sequence ID" value="BAB56215.1"/>
    <property type="molecule type" value="Genomic_DNA"/>
</dbReference>
<dbReference type="EMBL" id="BA000017">
    <property type="protein sequence ID" value="BAB57818.1"/>
    <property type="molecule type" value="Genomic_DNA"/>
</dbReference>
<dbReference type="SMR" id="P0A0D0"/>
<dbReference type="KEGG" id="sav:SAV0053"/>
<dbReference type="KEGG" id="sav:SAV1656"/>
<dbReference type="HOGENOM" id="CLU_071584_0_1_9"/>
<dbReference type="PhylomeDB" id="P0A0D0"/>
<dbReference type="Proteomes" id="UP000002481">
    <property type="component" value="Chromosome"/>
</dbReference>
<dbReference type="GO" id="GO:0070566">
    <property type="term" value="F:adenylyltransferase activity"/>
    <property type="evidence" value="ECO:0007669"/>
    <property type="project" value="InterPro"/>
</dbReference>
<dbReference type="GO" id="GO:0005524">
    <property type="term" value="F:ATP binding"/>
    <property type="evidence" value="ECO:0007669"/>
    <property type="project" value="UniProtKB-KW"/>
</dbReference>
<dbReference type="GO" id="GO:0046677">
    <property type="term" value="P:response to antibiotic"/>
    <property type="evidence" value="ECO:0007669"/>
    <property type="project" value="UniProtKB-KW"/>
</dbReference>
<dbReference type="CDD" id="cd05403">
    <property type="entry name" value="NT_KNTase_like"/>
    <property type="match status" value="1"/>
</dbReference>
<dbReference type="Gene3D" id="3.30.460.10">
    <property type="entry name" value="Beta Polymerase, domain 2"/>
    <property type="match status" value="1"/>
</dbReference>
<dbReference type="InterPro" id="IPR024172">
    <property type="entry name" value="AadA/Aad9"/>
</dbReference>
<dbReference type="InterPro" id="IPR025184">
    <property type="entry name" value="AadA_C"/>
</dbReference>
<dbReference type="InterPro" id="IPR043519">
    <property type="entry name" value="NT_sf"/>
</dbReference>
<dbReference type="InterPro" id="IPR002934">
    <property type="entry name" value="Polymerase_NTP_transf_dom"/>
</dbReference>
<dbReference type="NCBIfam" id="NF012212">
    <property type="entry name" value="ANT_9"/>
    <property type="match status" value="1"/>
</dbReference>
<dbReference type="NCBIfam" id="NF010309">
    <property type="entry name" value="PRK13746.1"/>
    <property type="match status" value="1"/>
</dbReference>
<dbReference type="Pfam" id="PF13427">
    <property type="entry name" value="AadA_C"/>
    <property type="match status" value="1"/>
</dbReference>
<dbReference type="Pfam" id="PF01909">
    <property type="entry name" value="NTP_transf_2"/>
    <property type="match status" value="1"/>
</dbReference>
<dbReference type="PIRSF" id="PIRSF000819">
    <property type="entry name" value="Streptomycin_3-adenylyltransf"/>
    <property type="match status" value="1"/>
</dbReference>
<dbReference type="SUPFAM" id="SSF81301">
    <property type="entry name" value="Nucleotidyltransferase"/>
    <property type="match status" value="1"/>
</dbReference>
<evidence type="ECO:0000250" key="1">
    <source>
        <dbReference type="UniProtKB" id="P0A0D2"/>
    </source>
</evidence>
<comment type="function">
    <text evidence="1">Mediates bacterial resistance to the antibiotic spectinomycin but not streptomycin.</text>
</comment>
<comment type="catalytic activity">
    <reaction evidence="1">
        <text>spectinomycin + ATP = 9-O-adenylylspectinomycin + diphosphate</text>
        <dbReference type="Rhea" id="RHEA:63228"/>
        <dbReference type="ChEBI" id="CHEBI:30616"/>
        <dbReference type="ChEBI" id="CHEBI:33019"/>
        <dbReference type="ChEBI" id="CHEBI:146260"/>
        <dbReference type="ChEBI" id="CHEBI:146261"/>
    </reaction>
</comment>
<accession>P0A0D0</accession>
<accession>P04827</accession>